<reference evidence="3" key="1">
    <citation type="journal article" date="2003" name="PLoS Biol.">
        <title>The genome sequence of Caenorhabditis briggsae: a platform for comparative genomics.</title>
        <authorList>
            <person name="Stein L.D."/>
            <person name="Bao Z."/>
            <person name="Blasiar D."/>
            <person name="Blumenthal T."/>
            <person name="Brent M.R."/>
            <person name="Chen N."/>
            <person name="Chinwalla A."/>
            <person name="Clarke L."/>
            <person name="Clee C."/>
            <person name="Coghlan A."/>
            <person name="Coulson A."/>
            <person name="D'Eustachio P."/>
            <person name="Fitch D.H.A."/>
            <person name="Fulton L.A."/>
            <person name="Fulton R.E."/>
            <person name="Griffiths-Jones S."/>
            <person name="Harris T.W."/>
            <person name="Hillier L.W."/>
            <person name="Kamath R."/>
            <person name="Kuwabara P.E."/>
            <person name="Mardis E.R."/>
            <person name="Marra M.A."/>
            <person name="Miner T.L."/>
            <person name="Minx P."/>
            <person name="Mullikin J.C."/>
            <person name="Plumb R.W."/>
            <person name="Rogers J."/>
            <person name="Schein J.E."/>
            <person name="Sohrmann M."/>
            <person name="Spieth J."/>
            <person name="Stajich J.E."/>
            <person name="Wei C."/>
            <person name="Willey D."/>
            <person name="Wilson R.K."/>
            <person name="Durbin R.M."/>
            <person name="Waterston R.H."/>
        </authorList>
    </citation>
    <scope>NUCLEOTIDE SEQUENCE [LARGE SCALE GENOMIC DNA]</scope>
    <source>
        <strain evidence="3">AF16</strain>
    </source>
</reference>
<gene>
    <name type="primary">cids-1</name>
    <name type="ORF">CBG24777</name>
</gene>
<sequence>MSDFTEQTLRQKLANLSNHSNSIQTTSSWLLKNHNNREIIIRVWLKTVRKENKGAKVVNLLYVANDVAQNARKACPQFKDDFFPAIESAFRHCCELKAKEVENAIGKLIHVWKERQIYSQSQCKRLQEAHQQMKLSGSFPSPAGRNNGKNSQPNQFIVEEAKKNAQDVLVSLKRLQNPPSTERDIRIQLSKYPDNISCPEKLQSVQNSEEAKALLTQNEEALPMLEDYVKRLKEETKERESLETNLNMLIQNVRMSIEHHEKLCRDVKRKEDRIKADLLEVEKTFESLPDLTAEMPNAPLPTLEALFQKRK</sequence>
<feature type="chain" id="PRO_0000352648" description="CID domain-containing protein 1">
    <location>
        <begin position="1"/>
        <end position="311"/>
    </location>
</feature>
<feature type="domain" description="CID" evidence="2">
    <location>
        <begin position="1"/>
        <end position="134"/>
    </location>
</feature>
<feature type="coiled-coil region" evidence="1">
    <location>
        <begin position="224"/>
        <end position="256"/>
    </location>
</feature>
<name>CIDS1_CAEBR</name>
<protein>
    <recommendedName>
        <fullName>CID domain-containing protein 1</fullName>
    </recommendedName>
</protein>
<keyword id="KW-0175">Coiled coil</keyword>
<keyword id="KW-1185">Reference proteome</keyword>
<organism>
    <name type="scientific">Caenorhabditis briggsae</name>
    <dbReference type="NCBI Taxonomy" id="6238"/>
    <lineage>
        <taxon>Eukaryota</taxon>
        <taxon>Metazoa</taxon>
        <taxon>Ecdysozoa</taxon>
        <taxon>Nematoda</taxon>
        <taxon>Chromadorea</taxon>
        <taxon>Rhabditida</taxon>
        <taxon>Rhabditina</taxon>
        <taxon>Rhabditomorpha</taxon>
        <taxon>Rhabditoidea</taxon>
        <taxon>Rhabditidae</taxon>
        <taxon>Peloderinae</taxon>
        <taxon>Caenorhabditis</taxon>
    </lineage>
</organism>
<dbReference type="EMBL" id="HE601114">
    <property type="protein sequence ID" value="CAP21311.1"/>
    <property type="molecule type" value="Genomic_DNA"/>
</dbReference>
<dbReference type="SMR" id="A8WLG6"/>
<dbReference type="STRING" id="6238.A8WLG6"/>
<dbReference type="EnsemblMetazoa" id="CBG24777a.1">
    <property type="protein sequence ID" value="CBG24777a.1"/>
    <property type="gene ID" value="WBGene00042814"/>
</dbReference>
<dbReference type="KEGG" id="cbr:CBG_24777"/>
<dbReference type="CTD" id="8590490"/>
<dbReference type="WormBase" id="CBG24777a">
    <property type="protein sequence ID" value="CBP13597"/>
    <property type="gene ID" value="WBGene00042814"/>
    <property type="gene designation" value="Cbr-cids-1"/>
</dbReference>
<dbReference type="eggNOG" id="KOG2669">
    <property type="taxonomic scope" value="Eukaryota"/>
</dbReference>
<dbReference type="HOGENOM" id="CLU_842627_0_0_1"/>
<dbReference type="OMA" id="MSIEHHE"/>
<dbReference type="Proteomes" id="UP000008549">
    <property type="component" value="Unassembled WGS sequence"/>
</dbReference>
<dbReference type="GO" id="GO:0000993">
    <property type="term" value="F:RNA polymerase II complex binding"/>
    <property type="evidence" value="ECO:0000318"/>
    <property type="project" value="GO_Central"/>
</dbReference>
<dbReference type="GO" id="GO:0031124">
    <property type="term" value="P:mRNA 3'-end processing"/>
    <property type="evidence" value="ECO:0000318"/>
    <property type="project" value="GO_Central"/>
</dbReference>
<dbReference type="CDD" id="cd17002">
    <property type="entry name" value="CID_RPRD1"/>
    <property type="match status" value="1"/>
</dbReference>
<dbReference type="FunFam" id="1.25.40.90:FF:000081">
    <property type="entry name" value="CID domain-containing protein 1"/>
    <property type="match status" value="1"/>
</dbReference>
<dbReference type="Gene3D" id="1.25.40.90">
    <property type="match status" value="1"/>
</dbReference>
<dbReference type="Gene3D" id="6.10.250.2560">
    <property type="match status" value="1"/>
</dbReference>
<dbReference type="InterPro" id="IPR006569">
    <property type="entry name" value="CID_dom"/>
</dbReference>
<dbReference type="InterPro" id="IPR008942">
    <property type="entry name" value="ENTH_VHS"/>
</dbReference>
<dbReference type="InterPro" id="IPR032337">
    <property type="entry name" value="RPRD1A/B_C"/>
</dbReference>
<dbReference type="PANTHER" id="PTHR12460:SF0">
    <property type="entry name" value="CID DOMAIN-CONTAINING PROTEIN-RELATED"/>
    <property type="match status" value="1"/>
</dbReference>
<dbReference type="PANTHER" id="PTHR12460">
    <property type="entry name" value="CYCLIN-DEPENDENT KINASE INHIBITOR-RELATED PROTEIN"/>
    <property type="match status" value="1"/>
</dbReference>
<dbReference type="Pfam" id="PF04818">
    <property type="entry name" value="CID"/>
    <property type="match status" value="1"/>
</dbReference>
<dbReference type="Pfam" id="PF16566">
    <property type="entry name" value="CREPT"/>
    <property type="match status" value="1"/>
</dbReference>
<dbReference type="SMART" id="SM00582">
    <property type="entry name" value="RPR"/>
    <property type="match status" value="1"/>
</dbReference>
<dbReference type="SUPFAM" id="SSF48464">
    <property type="entry name" value="ENTH/VHS domain"/>
    <property type="match status" value="1"/>
</dbReference>
<dbReference type="PROSITE" id="PS51391">
    <property type="entry name" value="CID"/>
    <property type="match status" value="1"/>
</dbReference>
<accession>A8WLG6</accession>
<evidence type="ECO:0000255" key="1"/>
<evidence type="ECO:0000255" key="2">
    <source>
        <dbReference type="PROSITE-ProRule" id="PRU00724"/>
    </source>
</evidence>
<evidence type="ECO:0000312" key="3">
    <source>
        <dbReference type="EMBL" id="CAP21311.1"/>
    </source>
</evidence>
<proteinExistence type="predicted"/>